<comment type="function">
    <text evidence="1">Required for accurate and efficient protein synthesis under certain stress conditions. May act as a fidelity factor of the translation reaction, by catalyzing a one-codon backward translocation of tRNAs on improperly translocated ribosomes. Back-translocation proceeds from a post-translocation (POST) complex to a pre-translocation (PRE) complex, thus giving elongation factor G a second chance to translocate the tRNAs correctly. Binds to ribosomes in a GTP-dependent manner.</text>
</comment>
<comment type="catalytic activity">
    <reaction evidence="1">
        <text>GTP + H2O = GDP + phosphate + H(+)</text>
        <dbReference type="Rhea" id="RHEA:19669"/>
        <dbReference type="ChEBI" id="CHEBI:15377"/>
        <dbReference type="ChEBI" id="CHEBI:15378"/>
        <dbReference type="ChEBI" id="CHEBI:37565"/>
        <dbReference type="ChEBI" id="CHEBI:43474"/>
        <dbReference type="ChEBI" id="CHEBI:58189"/>
        <dbReference type="EC" id="3.6.5.n1"/>
    </reaction>
</comment>
<comment type="subcellular location">
    <subcellularLocation>
        <location evidence="1">Cell membrane</location>
        <topology evidence="1">Peripheral membrane protein</topology>
        <orientation evidence="1">Cytoplasmic side</orientation>
    </subcellularLocation>
</comment>
<comment type="similarity">
    <text evidence="1">Belongs to the TRAFAC class translation factor GTPase superfamily. Classic translation factor GTPase family. LepA subfamily.</text>
</comment>
<protein>
    <recommendedName>
        <fullName evidence="1">Elongation factor 4</fullName>
        <shortName evidence="1">EF-4</shortName>
        <ecNumber evidence="1">3.6.5.n1</ecNumber>
    </recommendedName>
    <alternativeName>
        <fullName evidence="1">Ribosomal back-translocase LepA</fullName>
    </alternativeName>
</protein>
<name>LEPA_CLOK5</name>
<dbReference type="EC" id="3.6.5.n1" evidence="1"/>
<dbReference type="EMBL" id="CP000673">
    <property type="protein sequence ID" value="EDK32949.1"/>
    <property type="molecule type" value="Genomic_DNA"/>
</dbReference>
<dbReference type="RefSeq" id="WP_012101278.1">
    <property type="nucleotide sequence ID" value="NC_009706.1"/>
</dbReference>
<dbReference type="SMR" id="A5N6L8"/>
<dbReference type="STRING" id="431943.CKL_0898"/>
<dbReference type="KEGG" id="ckl:CKL_0898"/>
<dbReference type="eggNOG" id="COG0481">
    <property type="taxonomic scope" value="Bacteria"/>
</dbReference>
<dbReference type="HOGENOM" id="CLU_009995_3_3_9"/>
<dbReference type="Proteomes" id="UP000002411">
    <property type="component" value="Chromosome"/>
</dbReference>
<dbReference type="GO" id="GO:0005886">
    <property type="term" value="C:plasma membrane"/>
    <property type="evidence" value="ECO:0007669"/>
    <property type="project" value="UniProtKB-SubCell"/>
</dbReference>
<dbReference type="GO" id="GO:0005525">
    <property type="term" value="F:GTP binding"/>
    <property type="evidence" value="ECO:0007669"/>
    <property type="project" value="UniProtKB-UniRule"/>
</dbReference>
<dbReference type="GO" id="GO:0003924">
    <property type="term" value="F:GTPase activity"/>
    <property type="evidence" value="ECO:0007669"/>
    <property type="project" value="UniProtKB-UniRule"/>
</dbReference>
<dbReference type="GO" id="GO:0043022">
    <property type="term" value="F:ribosome binding"/>
    <property type="evidence" value="ECO:0007669"/>
    <property type="project" value="UniProtKB-UniRule"/>
</dbReference>
<dbReference type="GO" id="GO:0003746">
    <property type="term" value="F:translation elongation factor activity"/>
    <property type="evidence" value="ECO:0007669"/>
    <property type="project" value="UniProtKB-UniRule"/>
</dbReference>
<dbReference type="GO" id="GO:0045727">
    <property type="term" value="P:positive regulation of translation"/>
    <property type="evidence" value="ECO:0007669"/>
    <property type="project" value="UniProtKB-UniRule"/>
</dbReference>
<dbReference type="CDD" id="cd03699">
    <property type="entry name" value="EF4_II"/>
    <property type="match status" value="1"/>
</dbReference>
<dbReference type="CDD" id="cd16260">
    <property type="entry name" value="EF4_III"/>
    <property type="match status" value="1"/>
</dbReference>
<dbReference type="CDD" id="cd01890">
    <property type="entry name" value="LepA"/>
    <property type="match status" value="1"/>
</dbReference>
<dbReference type="CDD" id="cd03709">
    <property type="entry name" value="lepA_C"/>
    <property type="match status" value="1"/>
</dbReference>
<dbReference type="FunFam" id="3.40.50.300:FF:000078">
    <property type="entry name" value="Elongation factor 4"/>
    <property type="match status" value="1"/>
</dbReference>
<dbReference type="FunFam" id="2.40.30.10:FF:000015">
    <property type="entry name" value="Translation factor GUF1, mitochondrial"/>
    <property type="match status" value="1"/>
</dbReference>
<dbReference type="FunFam" id="3.30.70.240:FF:000007">
    <property type="entry name" value="Translation factor GUF1, mitochondrial"/>
    <property type="match status" value="1"/>
</dbReference>
<dbReference type="FunFam" id="3.30.70.2570:FF:000001">
    <property type="entry name" value="Translation factor GUF1, mitochondrial"/>
    <property type="match status" value="1"/>
</dbReference>
<dbReference type="FunFam" id="3.30.70.870:FF:000004">
    <property type="entry name" value="Translation factor GUF1, mitochondrial"/>
    <property type="match status" value="1"/>
</dbReference>
<dbReference type="Gene3D" id="3.30.70.240">
    <property type="match status" value="1"/>
</dbReference>
<dbReference type="Gene3D" id="3.30.70.2570">
    <property type="entry name" value="Elongation factor 4, C-terminal domain"/>
    <property type="match status" value="1"/>
</dbReference>
<dbReference type="Gene3D" id="3.30.70.870">
    <property type="entry name" value="Elongation Factor G (Translational Gtpase), domain 3"/>
    <property type="match status" value="1"/>
</dbReference>
<dbReference type="Gene3D" id="3.40.50.300">
    <property type="entry name" value="P-loop containing nucleotide triphosphate hydrolases"/>
    <property type="match status" value="1"/>
</dbReference>
<dbReference type="Gene3D" id="2.40.30.10">
    <property type="entry name" value="Translation factors"/>
    <property type="match status" value="1"/>
</dbReference>
<dbReference type="HAMAP" id="MF_00071">
    <property type="entry name" value="LepA"/>
    <property type="match status" value="1"/>
</dbReference>
<dbReference type="InterPro" id="IPR006297">
    <property type="entry name" value="EF-4"/>
</dbReference>
<dbReference type="InterPro" id="IPR035647">
    <property type="entry name" value="EFG_III/V"/>
</dbReference>
<dbReference type="InterPro" id="IPR000640">
    <property type="entry name" value="EFG_V-like"/>
</dbReference>
<dbReference type="InterPro" id="IPR004161">
    <property type="entry name" value="EFTu-like_2"/>
</dbReference>
<dbReference type="InterPro" id="IPR031157">
    <property type="entry name" value="G_TR_CS"/>
</dbReference>
<dbReference type="InterPro" id="IPR038363">
    <property type="entry name" value="LepA_C_sf"/>
</dbReference>
<dbReference type="InterPro" id="IPR013842">
    <property type="entry name" value="LepA_CTD"/>
</dbReference>
<dbReference type="InterPro" id="IPR035654">
    <property type="entry name" value="LepA_IV"/>
</dbReference>
<dbReference type="InterPro" id="IPR027417">
    <property type="entry name" value="P-loop_NTPase"/>
</dbReference>
<dbReference type="InterPro" id="IPR005225">
    <property type="entry name" value="Small_GTP-bd"/>
</dbReference>
<dbReference type="InterPro" id="IPR000795">
    <property type="entry name" value="T_Tr_GTP-bd_dom"/>
</dbReference>
<dbReference type="InterPro" id="IPR009000">
    <property type="entry name" value="Transl_B-barrel_sf"/>
</dbReference>
<dbReference type="NCBIfam" id="TIGR01393">
    <property type="entry name" value="lepA"/>
    <property type="match status" value="1"/>
</dbReference>
<dbReference type="NCBIfam" id="TIGR00231">
    <property type="entry name" value="small_GTP"/>
    <property type="match status" value="1"/>
</dbReference>
<dbReference type="PANTHER" id="PTHR43512:SF4">
    <property type="entry name" value="TRANSLATION FACTOR GUF1 HOMOLOG, CHLOROPLASTIC"/>
    <property type="match status" value="1"/>
</dbReference>
<dbReference type="PANTHER" id="PTHR43512">
    <property type="entry name" value="TRANSLATION FACTOR GUF1-RELATED"/>
    <property type="match status" value="1"/>
</dbReference>
<dbReference type="Pfam" id="PF00679">
    <property type="entry name" value="EFG_C"/>
    <property type="match status" value="1"/>
</dbReference>
<dbReference type="Pfam" id="PF00009">
    <property type="entry name" value="GTP_EFTU"/>
    <property type="match status" value="1"/>
</dbReference>
<dbReference type="Pfam" id="PF03144">
    <property type="entry name" value="GTP_EFTU_D2"/>
    <property type="match status" value="1"/>
</dbReference>
<dbReference type="Pfam" id="PF06421">
    <property type="entry name" value="LepA_C"/>
    <property type="match status" value="1"/>
</dbReference>
<dbReference type="PRINTS" id="PR00315">
    <property type="entry name" value="ELONGATNFCT"/>
</dbReference>
<dbReference type="SMART" id="SM00838">
    <property type="entry name" value="EFG_C"/>
    <property type="match status" value="1"/>
</dbReference>
<dbReference type="SUPFAM" id="SSF54980">
    <property type="entry name" value="EF-G C-terminal domain-like"/>
    <property type="match status" value="2"/>
</dbReference>
<dbReference type="SUPFAM" id="SSF52540">
    <property type="entry name" value="P-loop containing nucleoside triphosphate hydrolases"/>
    <property type="match status" value="1"/>
</dbReference>
<dbReference type="SUPFAM" id="SSF50447">
    <property type="entry name" value="Translation proteins"/>
    <property type="match status" value="1"/>
</dbReference>
<dbReference type="PROSITE" id="PS00301">
    <property type="entry name" value="G_TR_1"/>
    <property type="match status" value="1"/>
</dbReference>
<dbReference type="PROSITE" id="PS51722">
    <property type="entry name" value="G_TR_2"/>
    <property type="match status" value="1"/>
</dbReference>
<evidence type="ECO:0000255" key="1">
    <source>
        <dbReference type="HAMAP-Rule" id="MF_00071"/>
    </source>
</evidence>
<keyword id="KW-1003">Cell membrane</keyword>
<keyword id="KW-0342">GTP-binding</keyword>
<keyword id="KW-0378">Hydrolase</keyword>
<keyword id="KW-0472">Membrane</keyword>
<keyword id="KW-0547">Nucleotide-binding</keyword>
<keyword id="KW-0648">Protein biosynthesis</keyword>
<keyword id="KW-1185">Reference proteome</keyword>
<reference key="1">
    <citation type="journal article" date="2008" name="Proc. Natl. Acad. Sci. U.S.A.">
        <title>The genome of Clostridium kluyveri, a strict anaerobe with unique metabolic features.</title>
        <authorList>
            <person name="Seedorf H."/>
            <person name="Fricke W.F."/>
            <person name="Veith B."/>
            <person name="Brueggemann H."/>
            <person name="Liesegang H."/>
            <person name="Strittmatter A."/>
            <person name="Miethke M."/>
            <person name="Buckel W."/>
            <person name="Hinderberger J."/>
            <person name="Li F."/>
            <person name="Hagemeier C."/>
            <person name="Thauer R.K."/>
            <person name="Gottschalk G."/>
        </authorList>
    </citation>
    <scope>NUCLEOTIDE SEQUENCE [LARGE SCALE GENOMIC DNA]</scope>
    <source>
        <strain>ATCC 8527 / DSM 555 / NBRC 12016 / NCIMB 10680 / K1</strain>
    </source>
</reference>
<gene>
    <name evidence="1" type="primary">lepA</name>
    <name type="ordered locus">CKL_0898</name>
</gene>
<sequence length="602" mass="67195">MHTERQKHIRNFSIVAHIDHGKSTLADRLIEKTGTLTEREMNSQVLDNMELEKERGITIKSQAIRLIYKRKDGGEYVLNLIDTPGHVDFNYEVSRSLAACEGAILVVDATQGIQAQTLANCYLAMEHDLEILPVINKIDLPSARAEEVKEEIEDIIGIEASEAPLVSAKTGLNIEQVLEAIVDKIPSPQGDENAPLKALIFDSNYDSYKGVVCHIRVKEGNIKPGDEIKLMATGKIYEVTETGIFVPNFMPRAELRAGDVGYFTASIKNVRDARVGDTVTGAKNQAKEPLKGYRPVISMVYSGIYPVDGAKYGELKEALEKLQVNDAALNFEPETSVALGFGFRCGFLGLLHMDVIQERVEREFNLDIITTAPSVIYKIGKTDGTVVELTNPTNMPPVSEIKYMEEPIVKASIITPSEYVGAVMELAQNRRGVFRDMQYIETTRVSLNYDIPLNEIIYNFFDVLKSRTRGYASLDYELKGYKSAKLVRLDVLLNGDMVDALSMIVPEERAYDRGRGIAEKLKGIIPRQLFEIPIQAAVGGKVIARETVKAMRKDVLAKCYGGDISRKRKLLEKQKEGKKRMRQVGTVEIPQEAFMAILKTEE</sequence>
<proteinExistence type="inferred from homology"/>
<accession>A5N6L8</accession>
<organism>
    <name type="scientific">Clostridium kluyveri (strain ATCC 8527 / DSM 555 / NBRC 12016 / NCIMB 10680 / K1)</name>
    <dbReference type="NCBI Taxonomy" id="431943"/>
    <lineage>
        <taxon>Bacteria</taxon>
        <taxon>Bacillati</taxon>
        <taxon>Bacillota</taxon>
        <taxon>Clostridia</taxon>
        <taxon>Eubacteriales</taxon>
        <taxon>Clostridiaceae</taxon>
        <taxon>Clostridium</taxon>
    </lineage>
</organism>
<feature type="chain" id="PRO_1000075126" description="Elongation factor 4">
    <location>
        <begin position="1"/>
        <end position="602"/>
    </location>
</feature>
<feature type="domain" description="tr-type G">
    <location>
        <begin position="7"/>
        <end position="189"/>
    </location>
</feature>
<feature type="binding site" evidence="1">
    <location>
        <begin position="19"/>
        <end position="24"/>
    </location>
    <ligand>
        <name>GTP</name>
        <dbReference type="ChEBI" id="CHEBI:37565"/>
    </ligand>
</feature>
<feature type="binding site" evidence="1">
    <location>
        <begin position="136"/>
        <end position="139"/>
    </location>
    <ligand>
        <name>GTP</name>
        <dbReference type="ChEBI" id="CHEBI:37565"/>
    </ligand>
</feature>